<feature type="chain" id="PRO_1000098672" description="tRNA dimethylallyltransferase">
    <location>
        <begin position="1"/>
        <end position="313"/>
    </location>
</feature>
<feature type="region of interest" description="Interaction with substrate tRNA" evidence="1">
    <location>
        <begin position="36"/>
        <end position="39"/>
    </location>
</feature>
<feature type="region of interest" description="Interaction with substrate tRNA" evidence="1">
    <location>
        <begin position="160"/>
        <end position="164"/>
    </location>
</feature>
<feature type="region of interest" description="Interaction with substrate tRNA" evidence="1">
    <location>
        <begin position="243"/>
        <end position="248"/>
    </location>
</feature>
<feature type="binding site" evidence="1">
    <location>
        <begin position="11"/>
        <end position="18"/>
    </location>
    <ligand>
        <name>ATP</name>
        <dbReference type="ChEBI" id="CHEBI:30616"/>
    </ligand>
</feature>
<feature type="binding site" evidence="1">
    <location>
        <begin position="13"/>
        <end position="18"/>
    </location>
    <ligand>
        <name>substrate</name>
    </ligand>
</feature>
<feature type="site" description="Interaction with substrate tRNA" evidence="1">
    <location>
        <position position="102"/>
    </location>
</feature>
<feature type="site" description="Interaction with substrate tRNA" evidence="1">
    <location>
        <position position="124"/>
    </location>
</feature>
<dbReference type="EC" id="2.5.1.75" evidence="1"/>
<dbReference type="EMBL" id="CP001050">
    <property type="protein sequence ID" value="ACF29537.1"/>
    <property type="molecule type" value="Genomic_DNA"/>
</dbReference>
<dbReference type="RefSeq" id="WP_003691073.1">
    <property type="nucleotide sequence ID" value="NC_011035.1"/>
</dbReference>
<dbReference type="SMR" id="B4RL47"/>
<dbReference type="GeneID" id="66753268"/>
<dbReference type="KEGG" id="ngk:NGK_0857"/>
<dbReference type="HOGENOM" id="CLU_032616_0_0_4"/>
<dbReference type="Proteomes" id="UP000002564">
    <property type="component" value="Chromosome"/>
</dbReference>
<dbReference type="GO" id="GO:0005524">
    <property type="term" value="F:ATP binding"/>
    <property type="evidence" value="ECO:0007669"/>
    <property type="project" value="UniProtKB-UniRule"/>
</dbReference>
<dbReference type="GO" id="GO:0052381">
    <property type="term" value="F:tRNA dimethylallyltransferase activity"/>
    <property type="evidence" value="ECO:0007669"/>
    <property type="project" value="UniProtKB-UniRule"/>
</dbReference>
<dbReference type="GO" id="GO:0006400">
    <property type="term" value="P:tRNA modification"/>
    <property type="evidence" value="ECO:0007669"/>
    <property type="project" value="TreeGrafter"/>
</dbReference>
<dbReference type="Gene3D" id="1.10.20.140">
    <property type="match status" value="1"/>
</dbReference>
<dbReference type="Gene3D" id="3.40.50.300">
    <property type="entry name" value="P-loop containing nucleotide triphosphate hydrolases"/>
    <property type="match status" value="1"/>
</dbReference>
<dbReference type="HAMAP" id="MF_00185">
    <property type="entry name" value="IPP_trans"/>
    <property type="match status" value="1"/>
</dbReference>
<dbReference type="InterPro" id="IPR039657">
    <property type="entry name" value="Dimethylallyltransferase"/>
</dbReference>
<dbReference type="InterPro" id="IPR018022">
    <property type="entry name" value="IPT"/>
</dbReference>
<dbReference type="InterPro" id="IPR027417">
    <property type="entry name" value="P-loop_NTPase"/>
</dbReference>
<dbReference type="NCBIfam" id="TIGR00174">
    <property type="entry name" value="miaA"/>
    <property type="match status" value="1"/>
</dbReference>
<dbReference type="PANTHER" id="PTHR11088">
    <property type="entry name" value="TRNA DIMETHYLALLYLTRANSFERASE"/>
    <property type="match status" value="1"/>
</dbReference>
<dbReference type="PANTHER" id="PTHR11088:SF60">
    <property type="entry name" value="TRNA DIMETHYLALLYLTRANSFERASE"/>
    <property type="match status" value="1"/>
</dbReference>
<dbReference type="Pfam" id="PF01715">
    <property type="entry name" value="IPPT"/>
    <property type="match status" value="1"/>
</dbReference>
<dbReference type="SUPFAM" id="SSF52540">
    <property type="entry name" value="P-loop containing nucleoside triphosphate hydrolases"/>
    <property type="match status" value="2"/>
</dbReference>
<keyword id="KW-0067">ATP-binding</keyword>
<keyword id="KW-0460">Magnesium</keyword>
<keyword id="KW-0547">Nucleotide-binding</keyword>
<keyword id="KW-0808">Transferase</keyword>
<keyword id="KW-0819">tRNA processing</keyword>
<comment type="function">
    <text evidence="1">Catalyzes the transfer of a dimethylallyl group onto the adenine at position 37 in tRNAs that read codons beginning with uridine, leading to the formation of N6-(dimethylallyl)adenosine (i(6)A).</text>
</comment>
<comment type="catalytic activity">
    <reaction evidence="1">
        <text>adenosine(37) in tRNA + dimethylallyl diphosphate = N(6)-dimethylallyladenosine(37) in tRNA + diphosphate</text>
        <dbReference type="Rhea" id="RHEA:26482"/>
        <dbReference type="Rhea" id="RHEA-COMP:10162"/>
        <dbReference type="Rhea" id="RHEA-COMP:10375"/>
        <dbReference type="ChEBI" id="CHEBI:33019"/>
        <dbReference type="ChEBI" id="CHEBI:57623"/>
        <dbReference type="ChEBI" id="CHEBI:74411"/>
        <dbReference type="ChEBI" id="CHEBI:74415"/>
        <dbReference type="EC" id="2.5.1.75"/>
    </reaction>
</comment>
<comment type="cofactor">
    <cofactor evidence="1">
        <name>Mg(2+)</name>
        <dbReference type="ChEBI" id="CHEBI:18420"/>
    </cofactor>
</comment>
<comment type="subunit">
    <text evidence="1">Monomer.</text>
</comment>
<comment type="similarity">
    <text evidence="1">Belongs to the IPP transferase family.</text>
</comment>
<protein>
    <recommendedName>
        <fullName evidence="1">tRNA dimethylallyltransferase</fullName>
        <ecNumber evidence="1">2.5.1.75</ecNumber>
    </recommendedName>
    <alternativeName>
        <fullName evidence="1">Dimethylallyl diphosphate:tRNA dimethylallyltransferase</fullName>
        <shortName evidence="1">DMAPP:tRNA dimethylallyltransferase</shortName>
        <shortName evidence="1">DMATase</shortName>
    </alternativeName>
    <alternativeName>
        <fullName evidence="1">Isopentenyl-diphosphate:tRNA isopentenyltransferase</fullName>
        <shortName evidence="1">IPP transferase</shortName>
        <shortName evidence="1">IPPT</shortName>
        <shortName evidence="1">IPTase</shortName>
    </alternativeName>
</protein>
<evidence type="ECO:0000255" key="1">
    <source>
        <dbReference type="HAMAP-Rule" id="MF_00185"/>
    </source>
</evidence>
<organism>
    <name type="scientific">Neisseria gonorrhoeae (strain NCCP11945)</name>
    <dbReference type="NCBI Taxonomy" id="521006"/>
    <lineage>
        <taxon>Bacteria</taxon>
        <taxon>Pseudomonadati</taxon>
        <taxon>Pseudomonadota</taxon>
        <taxon>Betaproteobacteria</taxon>
        <taxon>Neisseriales</taxon>
        <taxon>Neisseriaceae</taxon>
        <taxon>Neisseria</taxon>
    </lineage>
</organism>
<gene>
    <name evidence="1" type="primary">miaA</name>
    <name type="ordered locus">NGK_0857</name>
</gene>
<accession>B4RL47</accession>
<sequence>MPTPKAFTLLGPTACGKTALALKIAETLPVEIISLDSALLYTGMDIGTAKPSASERAFVPHHLIDIITPVQTYSAARFVEDCTRLTGEITARGKCPLIVGGTMMYFRALTQGLNDLPEADACLRADLDEQKQMYGLDFLYRTLQKVDPETACRLKPNDSQRIGRALEVYYLTGRPMSAHLNGQPEHTLPFELYTAALIPENRARLHENIALRFHLMLEQGFIGEVENLRRRYPGLTADSPAIRCVGYRQAWEHLDGATDRQTFIEKGIAATRQLAKRQLTWLRKTPLDCVADPFSDGTSGTRLIEAAKRFFGE</sequence>
<reference key="1">
    <citation type="journal article" date="2008" name="J. Bacteriol.">
        <title>Complete genome sequence of Neisseria gonorrhoeae NCCP11945.</title>
        <authorList>
            <person name="Chung G.T."/>
            <person name="Yoo J.S."/>
            <person name="Oh H.B."/>
            <person name="Lee Y.S."/>
            <person name="Cha S.H."/>
            <person name="Kim S.J."/>
            <person name="Yoo C.K."/>
        </authorList>
    </citation>
    <scope>NUCLEOTIDE SEQUENCE [LARGE SCALE GENOMIC DNA]</scope>
    <source>
        <strain>NCCP11945</strain>
    </source>
</reference>
<proteinExistence type="inferred from homology"/>
<name>MIAA_NEIG2</name>